<name>SELD_SHIBS</name>
<protein>
    <recommendedName>
        <fullName evidence="1">Selenide, water dikinase</fullName>
        <ecNumber evidence="1">2.7.9.3</ecNumber>
    </recommendedName>
    <alternativeName>
        <fullName evidence="1">Selenium donor protein</fullName>
    </alternativeName>
    <alternativeName>
        <fullName evidence="1">Selenophosphate synthase</fullName>
    </alternativeName>
</protein>
<feature type="chain" id="PRO_0000318658" description="Selenide, water dikinase">
    <location>
        <begin position="1"/>
        <end position="347"/>
    </location>
</feature>
<feature type="active site" evidence="1">
    <location>
        <position position="17"/>
    </location>
</feature>
<feature type="binding site" description="in other chain" evidence="1">
    <location>
        <position position="20"/>
    </location>
    <ligand>
        <name>ATP</name>
        <dbReference type="ChEBI" id="CHEBI:30616"/>
        <note>ligand shared between dimeric partners</note>
    </ligand>
</feature>
<feature type="binding site" description="in other chain" evidence="1">
    <location>
        <begin position="48"/>
        <end position="50"/>
    </location>
    <ligand>
        <name>ATP</name>
        <dbReference type="ChEBI" id="CHEBI:30616"/>
        <note>ligand shared between dimeric partners</note>
    </ligand>
</feature>
<feature type="binding site" evidence="1">
    <location>
        <position position="51"/>
    </location>
    <ligand>
        <name>Mg(2+)</name>
        <dbReference type="ChEBI" id="CHEBI:18420"/>
    </ligand>
</feature>
<feature type="binding site" description="in other chain" evidence="1">
    <location>
        <position position="68"/>
    </location>
    <ligand>
        <name>ATP</name>
        <dbReference type="ChEBI" id="CHEBI:30616"/>
        <note>ligand shared between dimeric partners</note>
    </ligand>
</feature>
<feature type="binding site" description="in other chain" evidence="1">
    <location>
        <position position="91"/>
    </location>
    <ligand>
        <name>ATP</name>
        <dbReference type="ChEBI" id="CHEBI:30616"/>
        <note>ligand shared between dimeric partners</note>
    </ligand>
</feature>
<feature type="binding site" evidence="1">
    <location>
        <position position="91"/>
    </location>
    <ligand>
        <name>Mg(2+)</name>
        <dbReference type="ChEBI" id="CHEBI:18420"/>
    </ligand>
</feature>
<feature type="binding site" evidence="1">
    <location>
        <begin position="139"/>
        <end position="141"/>
    </location>
    <ligand>
        <name>ATP</name>
        <dbReference type="ChEBI" id="CHEBI:30616"/>
        <note>ligand shared between dimeric partners</note>
    </ligand>
</feature>
<feature type="binding site" evidence="1">
    <location>
        <position position="227"/>
    </location>
    <ligand>
        <name>Mg(2+)</name>
        <dbReference type="ChEBI" id="CHEBI:18420"/>
    </ligand>
</feature>
<feature type="site" description="Important for catalytic activity" evidence="1">
    <location>
        <position position="20"/>
    </location>
</feature>
<proteinExistence type="inferred from homology"/>
<reference key="1">
    <citation type="journal article" date="2005" name="Nucleic Acids Res.">
        <title>Genome dynamics and diversity of Shigella species, the etiologic agents of bacillary dysentery.</title>
        <authorList>
            <person name="Yang F."/>
            <person name="Yang J."/>
            <person name="Zhang X."/>
            <person name="Chen L."/>
            <person name="Jiang Y."/>
            <person name="Yan Y."/>
            <person name="Tang X."/>
            <person name="Wang J."/>
            <person name="Xiong Z."/>
            <person name="Dong J."/>
            <person name="Xue Y."/>
            <person name="Zhu Y."/>
            <person name="Xu X."/>
            <person name="Sun L."/>
            <person name="Chen S."/>
            <person name="Nie H."/>
            <person name="Peng J."/>
            <person name="Xu J."/>
            <person name="Wang Y."/>
            <person name="Yuan Z."/>
            <person name="Wen Y."/>
            <person name="Yao Z."/>
            <person name="Shen Y."/>
            <person name="Qiang B."/>
            <person name="Hou Y."/>
            <person name="Yu J."/>
            <person name="Jin Q."/>
        </authorList>
    </citation>
    <scope>NUCLEOTIDE SEQUENCE [LARGE SCALE GENOMIC DNA]</scope>
    <source>
        <strain>Sb227</strain>
    </source>
</reference>
<keyword id="KW-0067">ATP-binding</keyword>
<keyword id="KW-0418">Kinase</keyword>
<keyword id="KW-0460">Magnesium</keyword>
<keyword id="KW-0479">Metal-binding</keyword>
<keyword id="KW-0547">Nucleotide-binding</keyword>
<keyword id="KW-0711">Selenium</keyword>
<keyword id="KW-0808">Transferase</keyword>
<dbReference type="EC" id="2.7.9.3" evidence="1"/>
<dbReference type="EMBL" id="CP000036">
    <property type="protein sequence ID" value="ABB65950.1"/>
    <property type="molecule type" value="Genomic_DNA"/>
</dbReference>
<dbReference type="RefSeq" id="WP_001298241.1">
    <property type="nucleotide sequence ID" value="NC_007613.1"/>
</dbReference>
<dbReference type="SMR" id="Q321Q8"/>
<dbReference type="GeneID" id="93775981"/>
<dbReference type="KEGG" id="sbo:SBO_1323"/>
<dbReference type="HOGENOM" id="CLU_032859_0_1_6"/>
<dbReference type="Proteomes" id="UP000007067">
    <property type="component" value="Chromosome"/>
</dbReference>
<dbReference type="GO" id="GO:0005737">
    <property type="term" value="C:cytoplasm"/>
    <property type="evidence" value="ECO:0007669"/>
    <property type="project" value="TreeGrafter"/>
</dbReference>
<dbReference type="GO" id="GO:0005524">
    <property type="term" value="F:ATP binding"/>
    <property type="evidence" value="ECO:0007669"/>
    <property type="project" value="UniProtKB-UniRule"/>
</dbReference>
<dbReference type="GO" id="GO:0000287">
    <property type="term" value="F:magnesium ion binding"/>
    <property type="evidence" value="ECO:0007669"/>
    <property type="project" value="UniProtKB-UniRule"/>
</dbReference>
<dbReference type="GO" id="GO:0004756">
    <property type="term" value="F:selenide, water dikinase activity"/>
    <property type="evidence" value="ECO:0007669"/>
    <property type="project" value="UniProtKB-UniRule"/>
</dbReference>
<dbReference type="GO" id="GO:0016260">
    <property type="term" value="P:selenocysteine biosynthetic process"/>
    <property type="evidence" value="ECO:0007669"/>
    <property type="project" value="InterPro"/>
</dbReference>
<dbReference type="CDD" id="cd02195">
    <property type="entry name" value="SelD"/>
    <property type="match status" value="1"/>
</dbReference>
<dbReference type="FunFam" id="3.30.1330.10:FF:000003">
    <property type="entry name" value="Selenide, water dikinase"/>
    <property type="match status" value="1"/>
</dbReference>
<dbReference type="FunFam" id="3.90.650.10:FF:000004">
    <property type="entry name" value="Selenide, water dikinase"/>
    <property type="match status" value="1"/>
</dbReference>
<dbReference type="Gene3D" id="3.90.650.10">
    <property type="entry name" value="PurM-like C-terminal domain"/>
    <property type="match status" value="1"/>
</dbReference>
<dbReference type="Gene3D" id="3.30.1330.10">
    <property type="entry name" value="PurM-like, N-terminal domain"/>
    <property type="match status" value="1"/>
</dbReference>
<dbReference type="HAMAP" id="MF_00625">
    <property type="entry name" value="SelD"/>
    <property type="match status" value="1"/>
</dbReference>
<dbReference type="InterPro" id="IPR010918">
    <property type="entry name" value="PurM-like_C_dom"/>
</dbReference>
<dbReference type="InterPro" id="IPR036676">
    <property type="entry name" value="PurM-like_C_sf"/>
</dbReference>
<dbReference type="InterPro" id="IPR016188">
    <property type="entry name" value="PurM-like_N"/>
</dbReference>
<dbReference type="InterPro" id="IPR036921">
    <property type="entry name" value="PurM-like_N_sf"/>
</dbReference>
<dbReference type="InterPro" id="IPR023061">
    <property type="entry name" value="SelD_I"/>
</dbReference>
<dbReference type="InterPro" id="IPR004536">
    <property type="entry name" value="SPS/SelD"/>
</dbReference>
<dbReference type="NCBIfam" id="NF002098">
    <property type="entry name" value="PRK00943.1"/>
    <property type="match status" value="1"/>
</dbReference>
<dbReference type="NCBIfam" id="TIGR00476">
    <property type="entry name" value="selD"/>
    <property type="match status" value="1"/>
</dbReference>
<dbReference type="PANTHER" id="PTHR10256:SF0">
    <property type="entry name" value="INACTIVE SELENIDE, WATER DIKINASE-LIKE PROTEIN-RELATED"/>
    <property type="match status" value="1"/>
</dbReference>
<dbReference type="PANTHER" id="PTHR10256">
    <property type="entry name" value="SELENIDE, WATER DIKINASE"/>
    <property type="match status" value="1"/>
</dbReference>
<dbReference type="Pfam" id="PF00586">
    <property type="entry name" value="AIRS"/>
    <property type="match status" value="1"/>
</dbReference>
<dbReference type="Pfam" id="PF02769">
    <property type="entry name" value="AIRS_C"/>
    <property type="match status" value="1"/>
</dbReference>
<dbReference type="PIRSF" id="PIRSF036407">
    <property type="entry name" value="Selenphspht_syn"/>
    <property type="match status" value="1"/>
</dbReference>
<dbReference type="SUPFAM" id="SSF56042">
    <property type="entry name" value="PurM C-terminal domain-like"/>
    <property type="match status" value="1"/>
</dbReference>
<dbReference type="SUPFAM" id="SSF55326">
    <property type="entry name" value="PurM N-terminal domain-like"/>
    <property type="match status" value="1"/>
</dbReference>
<gene>
    <name evidence="1" type="primary">selD</name>
    <name type="ordered locus">SBO_1323</name>
</gene>
<sequence>MSENSIRLTQYSHGAGCGCKISPKVLETILHSEQAKFVDPNLLVGNETRDDAAVYDLGNGTSVISTTDFFMPIVDNPFDFGRIAATNAISDIFAMGGKPIMAIAILGWPINKLSPEIAREVTEGGRYACRQAGIALAGGHSIDAPEPIFGLAVTGIVPTERVKKNSTAQAGCKLFLTKPLGIGVLTTAEKKSLLKPEHQGLATEVMCRMNIAGASFANIEGVKAMTDVTGFGLLGHLSEMCQGAGVQARVDYDAIPKLPGVEEYIKLGAVPGGTERNFASYGHLMGEMPREVRDLLCDPQTSGGLLLAVMPEAENEVKATAAEFGIELTAIGELVPARGGRAMVEIR</sequence>
<comment type="function">
    <text evidence="1">Synthesizes selenophosphate from selenide and ATP.</text>
</comment>
<comment type="catalytic activity">
    <reaction evidence="1">
        <text>hydrogenselenide + ATP + H2O = selenophosphate + AMP + phosphate + 2 H(+)</text>
        <dbReference type="Rhea" id="RHEA:18737"/>
        <dbReference type="ChEBI" id="CHEBI:15377"/>
        <dbReference type="ChEBI" id="CHEBI:15378"/>
        <dbReference type="ChEBI" id="CHEBI:16144"/>
        <dbReference type="ChEBI" id="CHEBI:29317"/>
        <dbReference type="ChEBI" id="CHEBI:30616"/>
        <dbReference type="ChEBI" id="CHEBI:43474"/>
        <dbReference type="ChEBI" id="CHEBI:456215"/>
        <dbReference type="EC" id="2.7.9.3"/>
    </reaction>
</comment>
<comment type="cofactor">
    <cofactor evidence="1">
        <name>Mg(2+)</name>
        <dbReference type="ChEBI" id="CHEBI:18420"/>
    </cofactor>
    <text evidence="1">Binds 1 Mg(2+) ion per monomer.</text>
</comment>
<comment type="subunit">
    <text evidence="1">Homodimer.</text>
</comment>
<comment type="similarity">
    <text evidence="1">Belongs to the selenophosphate synthase 1 family. Class I subfamily.</text>
</comment>
<accession>Q321Q8</accession>
<evidence type="ECO:0000255" key="1">
    <source>
        <dbReference type="HAMAP-Rule" id="MF_00625"/>
    </source>
</evidence>
<organism>
    <name type="scientific">Shigella boydii serotype 4 (strain Sb227)</name>
    <dbReference type="NCBI Taxonomy" id="300268"/>
    <lineage>
        <taxon>Bacteria</taxon>
        <taxon>Pseudomonadati</taxon>
        <taxon>Pseudomonadota</taxon>
        <taxon>Gammaproteobacteria</taxon>
        <taxon>Enterobacterales</taxon>
        <taxon>Enterobacteriaceae</taxon>
        <taxon>Shigella</taxon>
    </lineage>
</organism>